<gene>
    <name type="primary">mtlA</name>
    <name type="ordered locus">spr0356</name>
</gene>
<dbReference type="EC" id="2.7.1.197" evidence="1 2"/>
<dbReference type="EMBL" id="AE007317">
    <property type="protein sequence ID" value="AAK99160.1"/>
    <property type="molecule type" value="Genomic_DNA"/>
</dbReference>
<dbReference type="PIR" id="D97916">
    <property type="entry name" value="D97916"/>
</dbReference>
<dbReference type="RefSeq" id="NP_357950.1">
    <property type="nucleotide sequence ID" value="NC_003098.1"/>
</dbReference>
<dbReference type="RefSeq" id="WP_000391686.1">
    <property type="nucleotide sequence ID" value="NC_003098.1"/>
</dbReference>
<dbReference type="SMR" id="Q8DR34"/>
<dbReference type="STRING" id="171101.spr0356"/>
<dbReference type="KEGG" id="spr:spr0356"/>
<dbReference type="PATRIC" id="fig|171101.6.peg.396"/>
<dbReference type="eggNOG" id="COG2213">
    <property type="taxonomic scope" value="Bacteria"/>
</dbReference>
<dbReference type="HOGENOM" id="CLU_028721_2_1_9"/>
<dbReference type="Proteomes" id="UP000000586">
    <property type="component" value="Chromosome"/>
</dbReference>
<dbReference type="GO" id="GO:0005886">
    <property type="term" value="C:plasma membrane"/>
    <property type="evidence" value="ECO:0007669"/>
    <property type="project" value="UniProtKB-SubCell"/>
</dbReference>
<dbReference type="GO" id="GO:0016301">
    <property type="term" value="F:kinase activity"/>
    <property type="evidence" value="ECO:0007669"/>
    <property type="project" value="UniProtKB-KW"/>
</dbReference>
<dbReference type="GO" id="GO:0022872">
    <property type="term" value="F:protein-N(PI)-phosphohistidine-mannitol phosphotransferase system transmembrane transporter activity"/>
    <property type="evidence" value="ECO:0007669"/>
    <property type="project" value="InterPro"/>
</dbReference>
<dbReference type="GO" id="GO:0009401">
    <property type="term" value="P:phosphoenolpyruvate-dependent sugar phosphotransferase system"/>
    <property type="evidence" value="ECO:0007669"/>
    <property type="project" value="UniProtKB-KW"/>
</dbReference>
<dbReference type="CDD" id="cd05567">
    <property type="entry name" value="PTS_IIB_mannitol"/>
    <property type="match status" value="2"/>
</dbReference>
<dbReference type="FunFam" id="3.40.50.2300:FF:000493">
    <property type="entry name" value="PTS system mannitol-specific transporter subunit EIIBC"/>
    <property type="match status" value="1"/>
</dbReference>
<dbReference type="Gene3D" id="3.40.50.2300">
    <property type="match status" value="2"/>
</dbReference>
<dbReference type="InterPro" id="IPR036095">
    <property type="entry name" value="PTS_EIIB-like_sf"/>
</dbReference>
<dbReference type="InterPro" id="IPR013011">
    <property type="entry name" value="PTS_EIIB_2"/>
</dbReference>
<dbReference type="InterPro" id="IPR003501">
    <property type="entry name" value="PTS_EIIB_2/3"/>
</dbReference>
<dbReference type="InterPro" id="IPR029503">
    <property type="entry name" value="PTS_EIIB_mannitol"/>
</dbReference>
<dbReference type="InterPro" id="IPR003352">
    <property type="entry name" value="PTS_EIIC"/>
</dbReference>
<dbReference type="InterPro" id="IPR013014">
    <property type="entry name" value="PTS_EIIC_2"/>
</dbReference>
<dbReference type="InterPro" id="IPR004718">
    <property type="entry name" value="PTS_IIC_mtl"/>
</dbReference>
<dbReference type="InterPro" id="IPR050893">
    <property type="entry name" value="Sugar_PTS"/>
</dbReference>
<dbReference type="NCBIfam" id="TIGR00851">
    <property type="entry name" value="mtlA"/>
    <property type="match status" value="1"/>
</dbReference>
<dbReference type="NCBIfam" id="NF011663">
    <property type="entry name" value="PRK15083.1"/>
    <property type="match status" value="1"/>
</dbReference>
<dbReference type="PANTHER" id="PTHR30181">
    <property type="entry name" value="MANNITOL PERMEASE IIC COMPONENT"/>
    <property type="match status" value="1"/>
</dbReference>
<dbReference type="PANTHER" id="PTHR30181:SF2">
    <property type="entry name" value="PTS SYSTEM MANNITOL-SPECIFIC EIICBA COMPONENT"/>
    <property type="match status" value="1"/>
</dbReference>
<dbReference type="Pfam" id="PF02378">
    <property type="entry name" value="PTS_EIIC"/>
    <property type="match status" value="1"/>
</dbReference>
<dbReference type="Pfam" id="PF02302">
    <property type="entry name" value="PTS_IIB"/>
    <property type="match status" value="1"/>
</dbReference>
<dbReference type="SUPFAM" id="SSF52794">
    <property type="entry name" value="PTS system IIB component-like"/>
    <property type="match status" value="2"/>
</dbReference>
<dbReference type="PROSITE" id="PS51099">
    <property type="entry name" value="PTS_EIIB_TYPE_2"/>
    <property type="match status" value="1"/>
</dbReference>
<dbReference type="PROSITE" id="PS51104">
    <property type="entry name" value="PTS_EIIC_TYPE_2"/>
    <property type="match status" value="1"/>
</dbReference>
<feature type="chain" id="PRO_0000186631" description="PTS system mannitol-specific EIICB component">
    <location>
        <begin position="1"/>
        <end position="589"/>
    </location>
</feature>
<feature type="topological domain" description="Cytoplasmic" evidence="1">
    <location>
        <begin position="1"/>
        <end position="25"/>
    </location>
</feature>
<feature type="transmembrane region" description="Helical" evidence="1">
    <location>
        <begin position="26"/>
        <end position="47"/>
    </location>
</feature>
<feature type="topological domain" description="Extracellular" evidence="1">
    <location>
        <begin position="48"/>
        <end position="51"/>
    </location>
</feature>
<feature type="transmembrane region" description="Helical" evidence="1">
    <location>
        <begin position="52"/>
        <end position="72"/>
    </location>
</feature>
<feature type="topological domain" description="Cytoplasmic" evidence="1">
    <location>
        <begin position="73"/>
        <end position="135"/>
    </location>
</feature>
<feature type="transmembrane region" description="Helical" evidence="1">
    <location>
        <begin position="136"/>
        <end position="157"/>
    </location>
</feature>
<feature type="topological domain" description="Extracellular" evidence="1">
    <location>
        <begin position="158"/>
        <end position="166"/>
    </location>
</feature>
<feature type="transmembrane region" description="Helical" evidence="1">
    <location>
        <begin position="167"/>
        <end position="187"/>
    </location>
</feature>
<feature type="topological domain" description="Cytoplasmic" evidence="1">
    <location>
        <begin position="188"/>
        <end position="274"/>
    </location>
</feature>
<feature type="transmembrane region" description="Helical" evidence="1">
    <location>
        <begin position="275"/>
        <end position="294"/>
    </location>
</feature>
<feature type="topological domain" description="Extracellular" evidence="1">
    <location>
        <begin position="295"/>
        <end position="316"/>
    </location>
</feature>
<feature type="transmembrane region" description="Helical" evidence="1">
    <location>
        <begin position="317"/>
        <end position="338"/>
    </location>
</feature>
<feature type="topological domain" description="Cytoplasmic" evidence="1">
    <location>
        <begin position="339"/>
        <end position="589"/>
    </location>
</feature>
<feature type="domain" description="PTS EIIC type-2" evidence="4">
    <location>
        <begin position="14"/>
        <end position="347"/>
    </location>
</feature>
<feature type="domain" description="PTS EIIB type-2" evidence="3">
    <location>
        <begin position="381"/>
        <end position="476"/>
    </location>
</feature>
<feature type="active site" description="Phosphocysteine intermediate; for EIIB activity" evidence="1 2">
    <location>
        <position position="387"/>
    </location>
</feature>
<feature type="modified residue" description="Phosphocysteine; by EIIA" evidence="1 2 3">
    <location>
        <position position="387"/>
    </location>
</feature>
<protein>
    <recommendedName>
        <fullName evidence="2">PTS system mannitol-specific EIICB component</fullName>
    </recommendedName>
    <alternativeName>
        <fullName evidence="2">EIICB-Mtl</fullName>
        <shortName evidence="2">EII-Mtl</shortName>
    </alternativeName>
    <domain>
        <recommendedName>
            <fullName evidence="2">Mannitol permease IIC component</fullName>
        </recommendedName>
        <alternativeName>
            <fullName evidence="2">PTS system mannitol-specific EIIC component</fullName>
        </alternativeName>
    </domain>
    <domain>
        <recommendedName>
            <fullName evidence="2">Mannitol-specific phosphotransferase enzyme IIB component</fullName>
            <ecNumber evidence="1 2">2.7.1.197</ecNumber>
        </recommendedName>
        <alternativeName>
            <fullName evidence="2">PTS system mannitol-specific EIIB component</fullName>
        </alternativeName>
    </domain>
</protein>
<evidence type="ECO:0000250" key="1">
    <source>
        <dbReference type="UniProtKB" id="P00550"/>
    </source>
</evidence>
<evidence type="ECO:0000250" key="2">
    <source>
        <dbReference type="UniProtKB" id="P28008"/>
    </source>
</evidence>
<evidence type="ECO:0000255" key="3">
    <source>
        <dbReference type="PROSITE-ProRule" id="PRU00422"/>
    </source>
</evidence>
<evidence type="ECO:0000255" key="4">
    <source>
        <dbReference type="PROSITE-ProRule" id="PRU00427"/>
    </source>
</evidence>
<proteinExistence type="inferred from homology"/>
<comment type="function">
    <text evidence="2">The phosphoenolpyruvate-dependent sugar phosphotransferase system (sugar PTS), a major carbohydrate active transport system, catalyzes the phosphorylation of incoming sugar substrates concomitantly with their translocation across the cell membrane. The enzyme II CmtAB PTS system is involved in D-mannitol transport.</text>
</comment>
<comment type="catalytic activity">
    <reaction evidence="1 2">
        <text>D-mannitol(out) + N(pros)-phospho-L-histidyl-[protein] = D-mannitol 1-phosphate(in) + L-histidyl-[protein]</text>
        <dbReference type="Rhea" id="RHEA:33363"/>
        <dbReference type="Rhea" id="RHEA-COMP:9745"/>
        <dbReference type="Rhea" id="RHEA-COMP:9746"/>
        <dbReference type="ChEBI" id="CHEBI:16899"/>
        <dbReference type="ChEBI" id="CHEBI:29979"/>
        <dbReference type="ChEBI" id="CHEBI:61381"/>
        <dbReference type="ChEBI" id="CHEBI:64837"/>
        <dbReference type="EC" id="2.7.1.197"/>
    </reaction>
</comment>
<comment type="subunit">
    <text evidence="2">Homodimer.</text>
</comment>
<comment type="subcellular location">
    <subcellularLocation>
        <location evidence="4">Cell membrane</location>
        <topology evidence="4">Multi-pass membrane protein</topology>
    </subcellularLocation>
</comment>
<comment type="domain">
    <text evidence="4">The EIIC type-2 domain forms the PTS system translocation channel and contains the specific substrate-binding site.</text>
</comment>
<comment type="domain">
    <text evidence="3">The PTS EIIB type-2 domain is phosphorylated by phospho-EIIA on a cysteinyl residue. Then, it transfers the phosphoryl group to the sugar substrate concomitantly with the sugar uptake processed by the PTS EIIC type-2 domain.</text>
</comment>
<accession>Q8DR34</accession>
<keyword id="KW-1003">Cell membrane</keyword>
<keyword id="KW-0418">Kinase</keyword>
<keyword id="KW-0472">Membrane</keyword>
<keyword id="KW-0597">Phosphoprotein</keyword>
<keyword id="KW-0598">Phosphotransferase system</keyword>
<keyword id="KW-1185">Reference proteome</keyword>
<keyword id="KW-0762">Sugar transport</keyword>
<keyword id="KW-0808">Transferase</keyword>
<keyword id="KW-0812">Transmembrane</keyword>
<keyword id="KW-1133">Transmembrane helix</keyword>
<keyword id="KW-0813">Transport</keyword>
<name>PTMCB_STRR6</name>
<sequence>MEEKVSLKVRVQKLGTSLSNMVMPNIGAFIAWGVLTALFIADGYLPNEQLATVVGPMLTYLLPILIGYTGGYMIHGQRGAVVGSIATVGAITGSSVPMFIGAMVMGPLGGWTIKKFDEKFQEKIRPGFEMLVNNFSAGLVGFALLLLAFYAIGPVVSTLTGAVGNGVEAIVNARLLPMANIIIEPAKVLFLNNALNHGIFTPLGVEQVAQAGKSILFLLEANPGPGLGILLAYAVFGKGSAKSSSWGAMVIHFFGGIHEIYFPYVMMKPTLFLAAMAGGISGTFTFQLLDAGLKSPASPGSIIAIMATAPKGVWPHLNILLGVLVAAVVSFLIAALILHADKSTEDSLEAAQAATQAAKAQSKGQLVSTSVDAVVSTDSVEKIIFACDAGMGSSAMGASILRDKVKKAGLELPVSNQAISNLLDTPKTLIVTQEELTPRAKDKSPSAIHVSVDNFLASPRYDEIVASLTGASPIAEIEGDIPTSAPVDSQEIDLNHIDAVVVAYGKAQGTATMGCETIRAIFRNKNIRIPVSTAKISELGEFNSKNIMIVTTISLQAEVQQAAPNSQFLIVDSLVTTPEYDKMAARMYK</sequence>
<reference key="1">
    <citation type="journal article" date="2001" name="J. Bacteriol.">
        <title>Genome of the bacterium Streptococcus pneumoniae strain R6.</title>
        <authorList>
            <person name="Hoskins J."/>
            <person name="Alborn W.E. Jr."/>
            <person name="Arnold J."/>
            <person name="Blaszczak L.C."/>
            <person name="Burgett S."/>
            <person name="DeHoff B.S."/>
            <person name="Estrem S.T."/>
            <person name="Fritz L."/>
            <person name="Fu D.-J."/>
            <person name="Fuller W."/>
            <person name="Geringer C."/>
            <person name="Gilmour R."/>
            <person name="Glass J.S."/>
            <person name="Khoja H."/>
            <person name="Kraft A.R."/>
            <person name="Lagace R.E."/>
            <person name="LeBlanc D.J."/>
            <person name="Lee L.N."/>
            <person name="Lefkowitz E.J."/>
            <person name="Lu J."/>
            <person name="Matsushima P."/>
            <person name="McAhren S.M."/>
            <person name="McHenney M."/>
            <person name="McLeaster K."/>
            <person name="Mundy C.W."/>
            <person name="Nicas T.I."/>
            <person name="Norris F.H."/>
            <person name="O'Gara M."/>
            <person name="Peery R.B."/>
            <person name="Robertson G.T."/>
            <person name="Rockey P."/>
            <person name="Sun P.-M."/>
            <person name="Winkler M.E."/>
            <person name="Yang Y."/>
            <person name="Young-Bellido M."/>
            <person name="Zhao G."/>
            <person name="Zook C.A."/>
            <person name="Baltz R.H."/>
            <person name="Jaskunas S.R."/>
            <person name="Rosteck P.R. Jr."/>
            <person name="Skatrud P.L."/>
            <person name="Glass J.I."/>
        </authorList>
    </citation>
    <scope>NUCLEOTIDE SEQUENCE [LARGE SCALE GENOMIC DNA]</scope>
    <source>
        <strain>ATCC BAA-255 / R6</strain>
    </source>
</reference>
<organism>
    <name type="scientific">Streptococcus pneumoniae (strain ATCC BAA-255 / R6)</name>
    <dbReference type="NCBI Taxonomy" id="171101"/>
    <lineage>
        <taxon>Bacteria</taxon>
        <taxon>Bacillati</taxon>
        <taxon>Bacillota</taxon>
        <taxon>Bacilli</taxon>
        <taxon>Lactobacillales</taxon>
        <taxon>Streptococcaceae</taxon>
        <taxon>Streptococcus</taxon>
    </lineage>
</organism>